<keyword id="KW-0007">Acetylation</keyword>
<keyword id="KW-0010">Activator</keyword>
<keyword id="KW-0090">Biological rhythms</keyword>
<keyword id="KW-0158">Chromosome</keyword>
<keyword id="KW-0175">Coiled coil</keyword>
<keyword id="KW-0227">DNA damage</keyword>
<keyword id="KW-0233">DNA recombination</keyword>
<keyword id="KW-0234">DNA repair</keyword>
<keyword id="KW-0238">DNA-binding</keyword>
<keyword id="KW-0391">Immunity</keyword>
<keyword id="KW-0399">Innate immunity</keyword>
<keyword id="KW-1017">Isopeptide bond</keyword>
<keyword id="KW-0488">Methylation</keyword>
<keyword id="KW-0507">mRNA processing</keyword>
<keyword id="KW-0508">mRNA splicing</keyword>
<keyword id="KW-0539">Nucleus</keyword>
<keyword id="KW-0597">Phosphoprotein</keyword>
<keyword id="KW-1185">Reference proteome</keyword>
<keyword id="KW-0677">Repeat</keyword>
<keyword id="KW-0678">Repressor</keyword>
<keyword id="KW-0694">RNA-binding</keyword>
<keyword id="KW-0804">Transcription</keyword>
<keyword id="KW-0805">Transcription regulation</keyword>
<keyword id="KW-0832">Ubl conjugation</keyword>
<feature type="chain" id="PRO_0000081685" description="Non-POU domain-containing octamer-binding protein">
    <location>
        <begin position="1"/>
        <end position="471"/>
    </location>
</feature>
<feature type="domain" description="RRM 1" evidence="6">
    <location>
        <begin position="74"/>
        <end position="141"/>
    </location>
</feature>
<feature type="domain" description="RRM 2" evidence="6">
    <location>
        <begin position="148"/>
        <end position="229"/>
    </location>
</feature>
<feature type="region of interest" description="Disordered" evidence="7">
    <location>
        <begin position="1"/>
        <end position="51"/>
    </location>
</feature>
<feature type="region of interest" description="DBHS" evidence="1">
    <location>
        <begin position="54"/>
        <end position="373"/>
    </location>
</feature>
<feature type="region of interest" description="Disordered" evidence="7">
    <location>
        <begin position="443"/>
        <end position="471"/>
    </location>
</feature>
<feature type="coiled-coil region" evidence="5">
    <location>
        <begin position="268"/>
        <end position="372"/>
    </location>
</feature>
<feature type="compositionally biased region" description="Polar residues" evidence="7">
    <location>
        <begin position="1"/>
        <end position="10"/>
    </location>
</feature>
<feature type="compositionally biased region" description="Basic residues" evidence="7">
    <location>
        <begin position="14"/>
        <end position="27"/>
    </location>
</feature>
<feature type="modified residue" description="N-acetylmethionine" evidence="4">
    <location>
        <position position="1"/>
    </location>
</feature>
<feature type="modified residue" description="N6-acetyllysine; alternate" evidence="2">
    <location>
        <position position="5"/>
    </location>
</feature>
<feature type="modified residue" description="Phosphothreonine" evidence="2">
    <location>
        <position position="6"/>
    </location>
</feature>
<feature type="modified residue" description="N6-acetyllysine" evidence="2">
    <location>
        <position position="11"/>
    </location>
</feature>
<feature type="modified residue" description="Phosphoserine" evidence="2">
    <location>
        <position position="147"/>
    </location>
</feature>
<feature type="modified residue" description="N6-acetyllysine; alternate" evidence="2">
    <location>
        <position position="198"/>
    </location>
</feature>
<feature type="modified residue" description="Phosphoserine" evidence="2">
    <location>
        <position position="262"/>
    </location>
</feature>
<feature type="modified residue" description="N6-acetyllysine" evidence="4">
    <location>
        <position position="295"/>
    </location>
</feature>
<feature type="modified residue" description="N6-acetyllysine; alternate" evidence="4">
    <location>
        <position position="371"/>
    </location>
</feature>
<feature type="modified residue" description="Phosphothreonine" evidence="2">
    <location>
        <position position="428"/>
    </location>
</feature>
<feature type="modified residue" description="Phosphothreonine" evidence="2">
    <location>
        <position position="440"/>
    </location>
</feature>
<feature type="modified residue" description="Phosphothreonine" evidence="2">
    <location>
        <position position="450"/>
    </location>
</feature>
<feature type="modified residue" description="Omega-N-methylarginine" evidence="2">
    <location>
        <position position="456"/>
    </location>
</feature>
<feature type="cross-link" description="Glycyl lysine isopeptide (Lys-Gly) (interchain with G-Cter in SUMO2); alternate" evidence="2">
    <location>
        <position position="5"/>
    </location>
</feature>
<feature type="cross-link" description="Glycyl lysine isopeptide (Lys-Gly) (interchain with G-Cter in SUMO2)" evidence="2">
    <location>
        <position position="60"/>
    </location>
</feature>
<feature type="cross-link" description="Glycyl lysine isopeptide (Lys-Gly) (interchain with G-Cter in SUMO2)" evidence="2">
    <location>
        <position position="96"/>
    </location>
</feature>
<feature type="cross-link" description="Glycyl lysine isopeptide (Lys-Gly) (interchain with G-Cter in SUMO2)" evidence="2">
    <location>
        <position position="99"/>
    </location>
</feature>
<feature type="cross-link" description="Glycyl lysine isopeptide (Lys-Gly) (interchain with G-Cter in SUMO2)" evidence="2">
    <location>
        <position position="126"/>
    </location>
</feature>
<feature type="cross-link" description="Glycyl lysine isopeptide (Lys-Gly) (interchain with G-Cter in SUMO2)" evidence="2">
    <location>
        <position position="190"/>
    </location>
</feature>
<feature type="cross-link" description="Glycyl lysine isopeptide (Lys-Gly) (interchain with G-Cter in SUMO2); alternate" evidence="2">
    <location>
        <position position="198"/>
    </location>
</feature>
<feature type="cross-link" description="Glycyl lysine isopeptide (Lys-Gly) (interchain with G-Cter in SUMO2)" evidence="2">
    <location>
        <position position="243"/>
    </location>
</feature>
<feature type="cross-link" description="Glycyl lysine isopeptide (Lys-Gly) (interchain with G-Cter in SUMO2)" evidence="2">
    <location>
        <position position="249"/>
    </location>
</feature>
<feature type="cross-link" description="Glycyl lysine isopeptide (Lys-Gly) (interchain with G-Cter in SUMO2); alternate" evidence="2">
    <location>
        <position position="371"/>
    </location>
</feature>
<feature type="cross-link" description="Glycyl lysine isopeptide (Lys-Gly) (interchain with G-Cter in SUMO2)" evidence="2">
    <location>
        <position position="467"/>
    </location>
</feature>
<protein>
    <recommendedName>
        <fullName>Non-POU domain-containing octamer-binding protein</fullName>
        <shortName>NonO protein</shortName>
    </recommendedName>
</protein>
<accession>Q5RFL9</accession>
<organism>
    <name type="scientific">Pongo abelii</name>
    <name type="common">Sumatran orangutan</name>
    <name type="synonym">Pongo pygmaeus abelii</name>
    <dbReference type="NCBI Taxonomy" id="9601"/>
    <lineage>
        <taxon>Eukaryota</taxon>
        <taxon>Metazoa</taxon>
        <taxon>Chordata</taxon>
        <taxon>Craniata</taxon>
        <taxon>Vertebrata</taxon>
        <taxon>Euteleostomi</taxon>
        <taxon>Mammalia</taxon>
        <taxon>Eutheria</taxon>
        <taxon>Euarchontoglires</taxon>
        <taxon>Primates</taxon>
        <taxon>Haplorrhini</taxon>
        <taxon>Catarrhini</taxon>
        <taxon>Hominidae</taxon>
        <taxon>Pongo</taxon>
    </lineage>
</organism>
<dbReference type="EMBL" id="CR857136">
    <property type="protein sequence ID" value="CAH89438.1"/>
    <property type="molecule type" value="mRNA"/>
</dbReference>
<dbReference type="RefSeq" id="NP_001124612.1">
    <property type="nucleotide sequence ID" value="NM_001131140.1"/>
</dbReference>
<dbReference type="RefSeq" id="XP_024096015.1">
    <property type="nucleotide sequence ID" value="XM_024240247.3"/>
</dbReference>
<dbReference type="BMRB" id="Q5RFL9"/>
<dbReference type="SMR" id="Q5RFL9"/>
<dbReference type="FunCoup" id="Q5RFL9">
    <property type="interactions" value="3752"/>
</dbReference>
<dbReference type="STRING" id="9601.ENSPPYP00000022896"/>
<dbReference type="Ensembl" id="ENSPPYT00000023859.3">
    <property type="protein sequence ID" value="ENSPPYP00000022896.3"/>
    <property type="gene ID" value="ENSPPYG00000020451.3"/>
</dbReference>
<dbReference type="GeneID" id="100171449"/>
<dbReference type="KEGG" id="pon:100171449"/>
<dbReference type="CTD" id="4841"/>
<dbReference type="eggNOG" id="KOG0115">
    <property type="taxonomic scope" value="Eukaryota"/>
</dbReference>
<dbReference type="GeneTree" id="ENSGT00940000154442"/>
<dbReference type="InParanoid" id="Q5RFL9"/>
<dbReference type="OMA" id="HGMAMNR"/>
<dbReference type="OrthoDB" id="10067824at2759"/>
<dbReference type="Proteomes" id="UP000001595">
    <property type="component" value="Chromosome X"/>
</dbReference>
<dbReference type="GO" id="GO:0005694">
    <property type="term" value="C:chromosome"/>
    <property type="evidence" value="ECO:0007669"/>
    <property type="project" value="UniProtKB-SubCell"/>
</dbReference>
<dbReference type="GO" id="GO:0001650">
    <property type="term" value="C:fibrillar center"/>
    <property type="evidence" value="ECO:0007669"/>
    <property type="project" value="Ensembl"/>
</dbReference>
<dbReference type="GO" id="GO:0016363">
    <property type="term" value="C:nuclear matrix"/>
    <property type="evidence" value="ECO:0007669"/>
    <property type="project" value="Ensembl"/>
</dbReference>
<dbReference type="GO" id="GO:0016607">
    <property type="term" value="C:nuclear speck"/>
    <property type="evidence" value="ECO:0007669"/>
    <property type="project" value="UniProtKB-SubCell"/>
</dbReference>
<dbReference type="GO" id="GO:0005634">
    <property type="term" value="C:nucleus"/>
    <property type="evidence" value="ECO:0000250"/>
    <property type="project" value="UniProtKB"/>
</dbReference>
<dbReference type="GO" id="GO:0042382">
    <property type="term" value="C:paraspeckles"/>
    <property type="evidence" value="ECO:0007669"/>
    <property type="project" value="Ensembl"/>
</dbReference>
<dbReference type="GO" id="GO:0090575">
    <property type="term" value="C:RNA polymerase II transcription regulator complex"/>
    <property type="evidence" value="ECO:0007669"/>
    <property type="project" value="Ensembl"/>
</dbReference>
<dbReference type="GO" id="GO:0003682">
    <property type="term" value="F:chromatin binding"/>
    <property type="evidence" value="ECO:0007669"/>
    <property type="project" value="Ensembl"/>
</dbReference>
<dbReference type="GO" id="GO:0003677">
    <property type="term" value="F:DNA binding"/>
    <property type="evidence" value="ECO:0007669"/>
    <property type="project" value="UniProtKB-KW"/>
</dbReference>
<dbReference type="GO" id="GO:0042802">
    <property type="term" value="F:identical protein binding"/>
    <property type="evidence" value="ECO:0007669"/>
    <property type="project" value="Ensembl"/>
</dbReference>
<dbReference type="GO" id="GO:0003723">
    <property type="term" value="F:RNA binding"/>
    <property type="evidence" value="ECO:0007669"/>
    <property type="project" value="UniProtKB-KW"/>
</dbReference>
<dbReference type="GO" id="GO:0002218">
    <property type="term" value="P:activation of innate immune response"/>
    <property type="evidence" value="ECO:0007669"/>
    <property type="project" value="Ensembl"/>
</dbReference>
<dbReference type="GO" id="GO:0007623">
    <property type="term" value="P:circadian rhythm"/>
    <property type="evidence" value="ECO:0000250"/>
    <property type="project" value="UniProtKB"/>
</dbReference>
<dbReference type="GO" id="GO:0006310">
    <property type="term" value="P:DNA recombination"/>
    <property type="evidence" value="ECO:0007669"/>
    <property type="project" value="UniProtKB-KW"/>
</dbReference>
<dbReference type="GO" id="GO:0006281">
    <property type="term" value="P:DNA repair"/>
    <property type="evidence" value="ECO:0007669"/>
    <property type="project" value="UniProtKB-KW"/>
</dbReference>
<dbReference type="GO" id="GO:0045087">
    <property type="term" value="P:innate immune response"/>
    <property type="evidence" value="ECO:0007669"/>
    <property type="project" value="UniProtKB-KW"/>
</dbReference>
<dbReference type="GO" id="GO:0006397">
    <property type="term" value="P:mRNA processing"/>
    <property type="evidence" value="ECO:0007669"/>
    <property type="project" value="UniProtKB-KW"/>
</dbReference>
<dbReference type="GO" id="GO:0045892">
    <property type="term" value="P:negative regulation of DNA-templated transcription"/>
    <property type="evidence" value="ECO:0000250"/>
    <property type="project" value="UniProtKB"/>
</dbReference>
<dbReference type="GO" id="GO:1903377">
    <property type="term" value="P:negative regulation of oxidative stress-induced neuron intrinsic apoptotic signaling pathway"/>
    <property type="evidence" value="ECO:0007669"/>
    <property type="project" value="Ensembl"/>
</dbReference>
<dbReference type="GO" id="GO:0042752">
    <property type="term" value="P:regulation of circadian rhythm"/>
    <property type="evidence" value="ECO:0000250"/>
    <property type="project" value="UniProtKB"/>
</dbReference>
<dbReference type="GO" id="GO:0008380">
    <property type="term" value="P:RNA splicing"/>
    <property type="evidence" value="ECO:0007669"/>
    <property type="project" value="UniProtKB-KW"/>
</dbReference>
<dbReference type="CDD" id="cd12946">
    <property type="entry name" value="NOPS_p54nrb_PSF_PSPC1"/>
    <property type="match status" value="1"/>
</dbReference>
<dbReference type="CDD" id="cd12588">
    <property type="entry name" value="RRM1_p54nrb"/>
    <property type="match status" value="1"/>
</dbReference>
<dbReference type="FunFam" id="3.30.70.330:FF:000226">
    <property type="entry name" value="Non-POU domain-containing octamer-binding protein"/>
    <property type="match status" value="1"/>
</dbReference>
<dbReference type="FunFam" id="3.30.70.330:FF:000043">
    <property type="entry name" value="paraspeckle component 1 isoform X1"/>
    <property type="match status" value="1"/>
</dbReference>
<dbReference type="Gene3D" id="3.30.70.330">
    <property type="match status" value="2"/>
</dbReference>
<dbReference type="Gene3D" id="6.10.250.1170">
    <property type="match status" value="1"/>
</dbReference>
<dbReference type="InterPro" id="IPR012975">
    <property type="entry name" value="NOPS"/>
</dbReference>
<dbReference type="InterPro" id="IPR012677">
    <property type="entry name" value="Nucleotide-bd_a/b_plait_sf"/>
</dbReference>
<dbReference type="InterPro" id="IPR034552">
    <property type="entry name" value="p54nrb_RRM1"/>
</dbReference>
<dbReference type="InterPro" id="IPR035979">
    <property type="entry name" value="RBD_domain_sf"/>
</dbReference>
<dbReference type="InterPro" id="IPR000504">
    <property type="entry name" value="RRM_dom"/>
</dbReference>
<dbReference type="PANTHER" id="PTHR23189">
    <property type="entry name" value="RNA RECOGNITION MOTIF-CONTAINING"/>
    <property type="match status" value="1"/>
</dbReference>
<dbReference type="Pfam" id="PF08075">
    <property type="entry name" value="NOPS"/>
    <property type="match status" value="1"/>
</dbReference>
<dbReference type="Pfam" id="PF00076">
    <property type="entry name" value="RRM_1"/>
    <property type="match status" value="2"/>
</dbReference>
<dbReference type="SMART" id="SM00360">
    <property type="entry name" value="RRM"/>
    <property type="match status" value="2"/>
</dbReference>
<dbReference type="SUPFAM" id="SSF54928">
    <property type="entry name" value="RNA-binding domain, RBD"/>
    <property type="match status" value="1"/>
</dbReference>
<dbReference type="PROSITE" id="PS50102">
    <property type="entry name" value="RRM"/>
    <property type="match status" value="2"/>
</dbReference>
<comment type="function">
    <text evidence="2 3 4">DNA- and RNA binding protein, involved in several nuclear processes. Binds the conventional octamer sequence in double-stranded DNA. Also binds single-stranded DNA and RNA at a site independent of the duplex site. Involved in pre-mRNA splicing, probably as a heterodimer with SFPQ. Interacts with U5 snRNA, probably by binding to a purine-rich sequence located on the 3' side of U5 snRNA stem 1b. Together with PSPC1, required for the formation of nuclear paraspeckles. The SFPQ-NONO heteromer associated with MATR3 may play a role in nuclear retention of defective RNAs. The SFPQ-NONO heteromer may be involved in DNA unwinding by modulating the function of topoisomerase I/TOP1. The SFPQ-NONO heteromer may be involved in DNA non-homologous end joining (NHEJ) required for double-strand break repair and V(D)J recombination and may stabilize paired DNA ends. In vitro, the complex strongly stimulates DNA end joining, binds directly to the DNA substrates and cooperates with the Ku70/G22P1-Ku80/XRCC5 (Ku) dimer to establish a functional preligation complex. NONO is involved in transcriptional regulation. The SFPQ-NONO-NR5A1 complex binds to the CYP17 promoter and regulates basal and cAMP-dependent transcriptional activity. NONO binds to an enhancer element in long terminal repeats of endogenous intracisternal A particles (IAPs) and activates transcription. Regulates the circadian clock by repressing the transcriptional activator activity of the CLOCK-BMAL1 heterodimer (By similarity). Important for the functional organization of GABAergic synapses. Plays a specific and important role in the regulation of synaptic RNAs and GPHN/gephyrin scaffold structure, through the regulation of GABRA2 transcript. Plays a key role during neuronal differentiation by recruiting TET1 to genomic loci and thereby regulating 5-hydroxymethylcytosine levels. Plays a role in the regulation of DNA virus-mediated innate immune response by assembling into the HDP-RNP complex, a complex that serves as a platform for IRF3 phosphorylation and subsequent innate immune response activation through the cGAS-STING pathway.</text>
</comment>
<comment type="subunit">
    <text evidence="2 4">Monomer and component of the SFPQ-NONO complex, which is probably a heterotetramer of two 52 kDa (NONO) and two 100 kDa (SFPQ) subunits. NONO is a component of spliceosome and U5.4/6 snRNP complexes (By similarity). Interacts with CPNE4 (via VWFA domain) (By similarity). Forms heterodimers with PSPC1; this involves formation of a coiled coil domain by helices from both proteins. Part of complex consisting of SFPQ, NONO and MATR3. Part of a complex consisting of SFPQ, NONO and NR5A1. Part of a complex consisting of SFPQ, NONO and TOP1. Interacts with SPI1 and SPIB. Interacts with RNF43 (By similarity). Interacts with PER1 and PER2 (By similarity). Part of the HDP-RNP complex composed of at least HEXIM1, PRKDC, XRCC5, XRCC6, paraspeckle proteins (SFPQ, NONO, PSPC1, RBM14, and MATR3) and NEAT1 RNA. Interacts (via second RRM domain) with WASL; the interaction is direct. Component of a multiprotein complex with WASL and SFPQ (By similarity). Interacts with ERCC6 (By similarity). Interacts (via DNA-binding domain) with TET1 (By similarity).</text>
</comment>
<comment type="subcellular location">
    <subcellularLocation>
        <location evidence="2">Nucleus</location>
    </subcellularLocation>
    <subcellularLocation>
        <location evidence="2">Nucleus</location>
        <location evidence="2">Nucleolus</location>
    </subcellularLocation>
    <subcellularLocation>
        <location evidence="2">Nucleus speckle</location>
    </subcellularLocation>
    <subcellularLocation>
        <location evidence="4">Chromosome</location>
    </subcellularLocation>
    <text evidence="2">Detected in punctate subnuclear structures often located adjacent to splicing speckles, called paraspeckles.</text>
</comment>
<proteinExistence type="evidence at transcript level"/>
<sequence>MQSNKTFNLEKQNHTPRKHHQHHHQQQHHQQQQQQPPPPPIPANGQQASSQNEGLTIDLKNFRKPGEKTFTQRSRLFVGNLPPDITEEEMRKLFEKYGKAGEVFIHKDKGFGFIRLETRTLAEIAKVELDNMPLRGKQLRVRFACHSASLTVRNLPQYVSNELLEEAFSVFGQVERAVVIVDDRGRPSGKGIVEFSGKPAARKALDRCSEGSFLLTTFPRPVTVEPMDQLDDEEGLPEKLVIKNQQFHKEREQPPRFAQPGSFEYEYAMRWKALIEMEKQQQDQVDRNIKEAREKLEMEMEAARHEHQVMLMRQDLMRRQEELRRMEELHNQEVQKRKQLELRQEEERRRREEEMRRQQEEMMRRQQEGFKGTFPDAREQEIRMGQMAMGGAMGINNRGAMPPAPVPAGTPAPPGPATMMPDGTLGLTPPTTERFGQAATMEGIGAIGGTPPAFNRAAPGAEFAPNKRRRY</sequence>
<gene>
    <name type="primary">NONO</name>
</gene>
<reference key="1">
    <citation type="submission" date="2004-11" db="EMBL/GenBank/DDBJ databases">
        <authorList>
            <consortium name="The German cDNA consortium"/>
        </authorList>
    </citation>
    <scope>NUCLEOTIDE SEQUENCE [LARGE SCALE MRNA]</scope>
    <source>
        <tissue>Kidney</tissue>
    </source>
</reference>
<evidence type="ECO:0000250" key="1"/>
<evidence type="ECO:0000250" key="2">
    <source>
        <dbReference type="UniProtKB" id="Q15233"/>
    </source>
</evidence>
<evidence type="ECO:0000250" key="3">
    <source>
        <dbReference type="UniProtKB" id="Q5FVM4"/>
    </source>
</evidence>
<evidence type="ECO:0000250" key="4">
    <source>
        <dbReference type="UniProtKB" id="Q99K48"/>
    </source>
</evidence>
<evidence type="ECO:0000255" key="5"/>
<evidence type="ECO:0000255" key="6">
    <source>
        <dbReference type="PROSITE-ProRule" id="PRU00176"/>
    </source>
</evidence>
<evidence type="ECO:0000256" key="7">
    <source>
        <dbReference type="SAM" id="MobiDB-lite"/>
    </source>
</evidence>
<name>NONO_PONAB</name>